<feature type="chain" id="PRO_0000177827" description="D-alanine--D-alanine ligase">
    <location>
        <begin position="1"/>
        <end position="306"/>
    </location>
</feature>
<feature type="domain" description="ATP-grasp" evidence="2">
    <location>
        <begin position="104"/>
        <end position="303"/>
    </location>
</feature>
<feature type="active site" evidence="1">
    <location>
        <position position="18"/>
    </location>
</feature>
<feature type="active site" evidence="1">
    <location>
        <position position="150"/>
    </location>
</feature>
<feature type="active site" evidence="1">
    <location>
        <position position="281"/>
    </location>
</feature>
<feature type="binding site" evidence="2">
    <location>
        <begin position="134"/>
        <end position="189"/>
    </location>
    <ligand>
        <name>ATP</name>
        <dbReference type="ChEBI" id="CHEBI:30616"/>
    </ligand>
</feature>
<feature type="binding site" evidence="2">
    <location>
        <position position="257"/>
    </location>
    <ligand>
        <name>Mg(2+)</name>
        <dbReference type="ChEBI" id="CHEBI:18420"/>
        <label>1</label>
    </ligand>
</feature>
<feature type="binding site" evidence="2">
    <location>
        <position position="270"/>
    </location>
    <ligand>
        <name>Mg(2+)</name>
        <dbReference type="ChEBI" id="CHEBI:18420"/>
        <label>1</label>
    </ligand>
</feature>
<feature type="binding site" evidence="2">
    <location>
        <position position="270"/>
    </location>
    <ligand>
        <name>Mg(2+)</name>
        <dbReference type="ChEBI" id="CHEBI:18420"/>
        <label>2</label>
    </ligand>
</feature>
<feature type="binding site" evidence="2">
    <location>
        <position position="272"/>
    </location>
    <ligand>
        <name>Mg(2+)</name>
        <dbReference type="ChEBI" id="CHEBI:18420"/>
        <label>2</label>
    </ligand>
</feature>
<name>DDL_HAEIN</name>
<reference key="1">
    <citation type="journal article" date="1995" name="Science">
        <title>Whole-genome random sequencing and assembly of Haemophilus influenzae Rd.</title>
        <authorList>
            <person name="Fleischmann R.D."/>
            <person name="Adams M.D."/>
            <person name="White O."/>
            <person name="Clayton R.A."/>
            <person name="Kirkness E.F."/>
            <person name="Kerlavage A.R."/>
            <person name="Bult C.J."/>
            <person name="Tomb J.-F."/>
            <person name="Dougherty B.A."/>
            <person name="Merrick J.M."/>
            <person name="McKenney K."/>
            <person name="Sutton G.G."/>
            <person name="FitzHugh W."/>
            <person name="Fields C.A."/>
            <person name="Gocayne J.D."/>
            <person name="Scott J.D."/>
            <person name="Shirley R."/>
            <person name="Liu L.-I."/>
            <person name="Glodek A."/>
            <person name="Kelley J.M."/>
            <person name="Weidman J.F."/>
            <person name="Phillips C.A."/>
            <person name="Spriggs T."/>
            <person name="Hedblom E."/>
            <person name="Cotton M.D."/>
            <person name="Utterback T.R."/>
            <person name="Hanna M.C."/>
            <person name="Nguyen D.T."/>
            <person name="Saudek D.M."/>
            <person name="Brandon R.C."/>
            <person name="Fine L.D."/>
            <person name="Fritchman J.L."/>
            <person name="Fuhrmann J.L."/>
            <person name="Geoghagen N.S.M."/>
            <person name="Gnehm C.L."/>
            <person name="McDonald L.A."/>
            <person name="Small K.V."/>
            <person name="Fraser C.M."/>
            <person name="Smith H.O."/>
            <person name="Venter J.C."/>
        </authorList>
    </citation>
    <scope>NUCLEOTIDE SEQUENCE [LARGE SCALE GENOMIC DNA]</scope>
    <source>
        <strain>ATCC 51907 / DSM 11121 / KW20 / Rd</strain>
    </source>
</reference>
<accession>P44405</accession>
<dbReference type="EC" id="6.3.2.4" evidence="2"/>
<dbReference type="EMBL" id="L42023">
    <property type="protein sequence ID" value="AAC22795.1"/>
    <property type="molecule type" value="Genomic_DNA"/>
</dbReference>
<dbReference type="PIR" id="F64185">
    <property type="entry name" value="F64185"/>
</dbReference>
<dbReference type="RefSeq" id="NP_439298.1">
    <property type="nucleotide sequence ID" value="NC_000907.1"/>
</dbReference>
<dbReference type="SMR" id="P44405"/>
<dbReference type="STRING" id="71421.HI_1140"/>
<dbReference type="EnsemblBacteria" id="AAC22795">
    <property type="protein sequence ID" value="AAC22795"/>
    <property type="gene ID" value="HI_1140"/>
</dbReference>
<dbReference type="KEGG" id="hin:HI_1140"/>
<dbReference type="PATRIC" id="fig|71421.8.peg.1190"/>
<dbReference type="eggNOG" id="COG1181">
    <property type="taxonomic scope" value="Bacteria"/>
</dbReference>
<dbReference type="HOGENOM" id="CLU_039268_1_2_6"/>
<dbReference type="OrthoDB" id="9813261at2"/>
<dbReference type="PhylomeDB" id="P44405"/>
<dbReference type="BioCyc" id="HINF71421:G1GJ1-1173-MONOMER"/>
<dbReference type="UniPathway" id="UPA00219"/>
<dbReference type="Proteomes" id="UP000000579">
    <property type="component" value="Chromosome"/>
</dbReference>
<dbReference type="GO" id="GO:0005829">
    <property type="term" value="C:cytosol"/>
    <property type="evidence" value="ECO:0000318"/>
    <property type="project" value="GO_Central"/>
</dbReference>
<dbReference type="GO" id="GO:0005524">
    <property type="term" value="F:ATP binding"/>
    <property type="evidence" value="ECO:0007669"/>
    <property type="project" value="UniProtKB-KW"/>
</dbReference>
<dbReference type="GO" id="GO:0008716">
    <property type="term" value="F:D-alanine-D-alanine ligase activity"/>
    <property type="evidence" value="ECO:0000318"/>
    <property type="project" value="GO_Central"/>
</dbReference>
<dbReference type="GO" id="GO:0046872">
    <property type="term" value="F:metal ion binding"/>
    <property type="evidence" value="ECO:0007669"/>
    <property type="project" value="UniProtKB-KW"/>
</dbReference>
<dbReference type="GO" id="GO:0071555">
    <property type="term" value="P:cell wall organization"/>
    <property type="evidence" value="ECO:0007669"/>
    <property type="project" value="UniProtKB-KW"/>
</dbReference>
<dbReference type="GO" id="GO:0009252">
    <property type="term" value="P:peptidoglycan biosynthetic process"/>
    <property type="evidence" value="ECO:0000318"/>
    <property type="project" value="GO_Central"/>
</dbReference>
<dbReference type="GO" id="GO:0008360">
    <property type="term" value="P:regulation of cell shape"/>
    <property type="evidence" value="ECO:0007669"/>
    <property type="project" value="UniProtKB-KW"/>
</dbReference>
<dbReference type="FunFam" id="3.30.1490.20:FF:000007">
    <property type="entry name" value="D-alanine--D-alanine ligase"/>
    <property type="match status" value="1"/>
</dbReference>
<dbReference type="FunFam" id="3.30.470.20:FF:000008">
    <property type="entry name" value="D-alanine--D-alanine ligase"/>
    <property type="match status" value="1"/>
</dbReference>
<dbReference type="FunFam" id="3.40.50.20:FF:000013">
    <property type="entry name" value="D-alanine--D-alanine ligase"/>
    <property type="match status" value="1"/>
</dbReference>
<dbReference type="Gene3D" id="3.40.50.20">
    <property type="match status" value="1"/>
</dbReference>
<dbReference type="Gene3D" id="3.30.1490.20">
    <property type="entry name" value="ATP-grasp fold, A domain"/>
    <property type="match status" value="1"/>
</dbReference>
<dbReference type="Gene3D" id="3.30.470.20">
    <property type="entry name" value="ATP-grasp fold, B domain"/>
    <property type="match status" value="1"/>
</dbReference>
<dbReference type="HAMAP" id="MF_00047">
    <property type="entry name" value="Dala_Dala_lig"/>
    <property type="match status" value="1"/>
</dbReference>
<dbReference type="InterPro" id="IPR011761">
    <property type="entry name" value="ATP-grasp"/>
</dbReference>
<dbReference type="InterPro" id="IPR013815">
    <property type="entry name" value="ATP_grasp_subdomain_1"/>
</dbReference>
<dbReference type="InterPro" id="IPR000291">
    <property type="entry name" value="D-Ala_lig_Van_CS"/>
</dbReference>
<dbReference type="InterPro" id="IPR005905">
    <property type="entry name" value="D_ala_D_ala"/>
</dbReference>
<dbReference type="InterPro" id="IPR011095">
    <property type="entry name" value="Dala_Dala_lig_C"/>
</dbReference>
<dbReference type="InterPro" id="IPR011127">
    <property type="entry name" value="Dala_Dala_lig_N"/>
</dbReference>
<dbReference type="InterPro" id="IPR016185">
    <property type="entry name" value="PreATP-grasp_dom_sf"/>
</dbReference>
<dbReference type="NCBIfam" id="TIGR01205">
    <property type="entry name" value="D_ala_D_alaTIGR"/>
    <property type="match status" value="1"/>
</dbReference>
<dbReference type="NCBIfam" id="NF002378">
    <property type="entry name" value="PRK01372.1"/>
    <property type="match status" value="1"/>
</dbReference>
<dbReference type="PANTHER" id="PTHR23132">
    <property type="entry name" value="D-ALANINE--D-ALANINE LIGASE"/>
    <property type="match status" value="1"/>
</dbReference>
<dbReference type="PANTHER" id="PTHR23132:SF23">
    <property type="entry name" value="D-ALANINE--D-ALANINE LIGASE B"/>
    <property type="match status" value="1"/>
</dbReference>
<dbReference type="Pfam" id="PF07478">
    <property type="entry name" value="Dala_Dala_lig_C"/>
    <property type="match status" value="1"/>
</dbReference>
<dbReference type="Pfam" id="PF01820">
    <property type="entry name" value="Dala_Dala_lig_N"/>
    <property type="match status" value="2"/>
</dbReference>
<dbReference type="PIRSF" id="PIRSF039102">
    <property type="entry name" value="Ddl/VanB"/>
    <property type="match status" value="1"/>
</dbReference>
<dbReference type="SUPFAM" id="SSF56059">
    <property type="entry name" value="Glutathione synthetase ATP-binding domain-like"/>
    <property type="match status" value="1"/>
</dbReference>
<dbReference type="SUPFAM" id="SSF52440">
    <property type="entry name" value="PreATP-grasp domain"/>
    <property type="match status" value="1"/>
</dbReference>
<dbReference type="PROSITE" id="PS50975">
    <property type="entry name" value="ATP_GRASP"/>
    <property type="match status" value="1"/>
</dbReference>
<dbReference type="PROSITE" id="PS00843">
    <property type="entry name" value="DALA_DALA_LIGASE_1"/>
    <property type="match status" value="1"/>
</dbReference>
<dbReference type="PROSITE" id="PS00844">
    <property type="entry name" value="DALA_DALA_LIGASE_2"/>
    <property type="match status" value="1"/>
</dbReference>
<protein>
    <recommendedName>
        <fullName evidence="2">D-alanine--D-alanine ligase</fullName>
        <ecNumber evidence="2">6.3.2.4</ecNumber>
    </recommendedName>
    <alternativeName>
        <fullName evidence="2">D-Ala-D-Ala ligase</fullName>
    </alternativeName>
    <alternativeName>
        <fullName evidence="2">D-alanylalanine synthetase</fullName>
    </alternativeName>
</protein>
<proteinExistence type="inferred from homology"/>
<comment type="function">
    <text evidence="2">Cell wall formation.</text>
</comment>
<comment type="catalytic activity">
    <reaction evidence="2">
        <text>2 D-alanine + ATP = D-alanyl-D-alanine + ADP + phosphate + H(+)</text>
        <dbReference type="Rhea" id="RHEA:11224"/>
        <dbReference type="ChEBI" id="CHEBI:15378"/>
        <dbReference type="ChEBI" id="CHEBI:30616"/>
        <dbReference type="ChEBI" id="CHEBI:43474"/>
        <dbReference type="ChEBI" id="CHEBI:57416"/>
        <dbReference type="ChEBI" id="CHEBI:57822"/>
        <dbReference type="ChEBI" id="CHEBI:456216"/>
        <dbReference type="EC" id="6.3.2.4"/>
    </reaction>
</comment>
<comment type="cofactor">
    <cofactor evidence="1">
        <name>Mg(2+)</name>
        <dbReference type="ChEBI" id="CHEBI:18420"/>
    </cofactor>
    <cofactor evidence="1">
        <name>Mn(2+)</name>
        <dbReference type="ChEBI" id="CHEBI:29035"/>
    </cofactor>
    <text evidence="1">Binds 2 magnesium or manganese ions per subunit.</text>
</comment>
<comment type="pathway">
    <text evidence="2">Cell wall biogenesis; peptidoglycan biosynthesis.</text>
</comment>
<comment type="subcellular location">
    <subcellularLocation>
        <location evidence="2">Cytoplasm</location>
    </subcellularLocation>
</comment>
<comment type="similarity">
    <text evidence="2">Belongs to the D-alanine--D-alanine ligase family.</text>
</comment>
<evidence type="ECO:0000250" key="1"/>
<evidence type="ECO:0000255" key="2">
    <source>
        <dbReference type="HAMAP-Rule" id="MF_00047"/>
    </source>
</evidence>
<sequence length="306" mass="33491">MNLKQEKIAVLLGGTSAEREVSLNSGKAVLEALLKQGYNAHPIDPKEYNVANLKKDGFNRAFNILHGRGGEDGTMQGLLEQIGLPYTGCGVMASALTMDKMRTKMLWKAFGLPVADMKVVTRETFSELDPQAVVAKLGLPLMVKPSLEGSSVGLTKVKAVEELKSAVEYALKFDNTILIEEWLAGDELTVPVLDNQVLPAIRIVPEGEFYDYEAKYISDNTQYFCPAGLTPEREQALSTLVKRAYDAVGCRGWSRIDVMCDAKGNFRLVEVNTNPGMTSHSLFPKSAATVGISFEQLVVKILELSL</sequence>
<keyword id="KW-0067">ATP-binding</keyword>
<keyword id="KW-0133">Cell shape</keyword>
<keyword id="KW-0961">Cell wall biogenesis/degradation</keyword>
<keyword id="KW-0963">Cytoplasm</keyword>
<keyword id="KW-0436">Ligase</keyword>
<keyword id="KW-0460">Magnesium</keyword>
<keyword id="KW-0464">Manganese</keyword>
<keyword id="KW-0479">Metal-binding</keyword>
<keyword id="KW-0547">Nucleotide-binding</keyword>
<keyword id="KW-0573">Peptidoglycan synthesis</keyword>
<keyword id="KW-1185">Reference proteome</keyword>
<gene>
    <name evidence="2" type="primary">ddl</name>
    <name type="synonym">ddlB</name>
    <name type="ordered locus">HI_1140</name>
</gene>
<organism>
    <name type="scientific">Haemophilus influenzae (strain ATCC 51907 / DSM 11121 / KW20 / Rd)</name>
    <dbReference type="NCBI Taxonomy" id="71421"/>
    <lineage>
        <taxon>Bacteria</taxon>
        <taxon>Pseudomonadati</taxon>
        <taxon>Pseudomonadota</taxon>
        <taxon>Gammaproteobacteria</taxon>
        <taxon>Pasteurellales</taxon>
        <taxon>Pasteurellaceae</taxon>
        <taxon>Haemophilus</taxon>
    </lineage>
</organism>